<reference key="1">
    <citation type="submission" date="2007-10" db="EMBL/GenBank/DDBJ databases">
        <title>Complete sequence of Desulfococcus oleovorans Hxd3.</title>
        <authorList>
            <consortium name="US DOE Joint Genome Institute"/>
            <person name="Copeland A."/>
            <person name="Lucas S."/>
            <person name="Lapidus A."/>
            <person name="Barry K."/>
            <person name="Glavina del Rio T."/>
            <person name="Dalin E."/>
            <person name="Tice H."/>
            <person name="Pitluck S."/>
            <person name="Kiss H."/>
            <person name="Brettin T."/>
            <person name="Bruce D."/>
            <person name="Detter J.C."/>
            <person name="Han C."/>
            <person name="Schmutz J."/>
            <person name="Larimer F."/>
            <person name="Land M."/>
            <person name="Hauser L."/>
            <person name="Kyrpides N."/>
            <person name="Kim E."/>
            <person name="Wawrik B."/>
            <person name="Richardson P."/>
        </authorList>
    </citation>
    <scope>NUCLEOTIDE SEQUENCE [LARGE SCALE GENOMIC DNA]</scope>
    <source>
        <strain>DSM 6200 / JCM 39069 / Hxd3</strain>
    </source>
</reference>
<protein>
    <recommendedName>
        <fullName evidence="1">Large ribosomal subunit protein uL22</fullName>
    </recommendedName>
    <alternativeName>
        <fullName evidence="2">50S ribosomal protein L22</fullName>
    </alternativeName>
</protein>
<proteinExistence type="inferred from homology"/>
<keyword id="KW-1185">Reference proteome</keyword>
<keyword id="KW-0687">Ribonucleoprotein</keyword>
<keyword id="KW-0689">Ribosomal protein</keyword>
<keyword id="KW-0694">RNA-binding</keyword>
<keyword id="KW-0699">rRNA-binding</keyword>
<name>RL22_DESOH</name>
<comment type="function">
    <text evidence="1">This protein binds specifically to 23S rRNA; its binding is stimulated by other ribosomal proteins, e.g. L4, L17, and L20. It is important during the early stages of 50S assembly. It makes multiple contacts with different domains of the 23S rRNA in the assembled 50S subunit and ribosome (By similarity).</text>
</comment>
<comment type="function">
    <text evidence="1">The globular domain of the protein is located near the polypeptide exit tunnel on the outside of the subunit, while an extended beta-hairpin is found that lines the wall of the exit tunnel in the center of the 70S ribosome.</text>
</comment>
<comment type="subunit">
    <text evidence="1">Part of the 50S ribosomal subunit.</text>
</comment>
<comment type="similarity">
    <text evidence="1">Belongs to the universal ribosomal protein uL22 family.</text>
</comment>
<organism>
    <name type="scientific">Desulfosudis oleivorans (strain DSM 6200 / JCM 39069 / Hxd3)</name>
    <name type="common">Desulfococcus oleovorans</name>
    <dbReference type="NCBI Taxonomy" id="96561"/>
    <lineage>
        <taxon>Bacteria</taxon>
        <taxon>Pseudomonadati</taxon>
        <taxon>Thermodesulfobacteriota</taxon>
        <taxon>Desulfobacteria</taxon>
        <taxon>Desulfobacterales</taxon>
        <taxon>Desulfosudaceae</taxon>
        <taxon>Desulfosudis</taxon>
    </lineage>
</organism>
<sequence>MEQVSATARYLRIGPQKVRMLVDGIKGKSVEKGLNTLRFMPNKGAGLVEKALRSAVANAEEKNMDVDGLVILNVLVDQGPTLKRFRPRARGRATRILKRTSHITVVLAEKAAKN</sequence>
<accession>A8ZV62</accession>
<dbReference type="EMBL" id="CP000859">
    <property type="protein sequence ID" value="ABW66523.1"/>
    <property type="molecule type" value="Genomic_DNA"/>
</dbReference>
<dbReference type="RefSeq" id="WP_012174141.1">
    <property type="nucleotide sequence ID" value="NC_009943.1"/>
</dbReference>
<dbReference type="SMR" id="A8ZV62"/>
<dbReference type="STRING" id="96561.Dole_0713"/>
<dbReference type="KEGG" id="dol:Dole_0713"/>
<dbReference type="eggNOG" id="COG0091">
    <property type="taxonomic scope" value="Bacteria"/>
</dbReference>
<dbReference type="HOGENOM" id="CLU_083987_3_3_7"/>
<dbReference type="OrthoDB" id="9805969at2"/>
<dbReference type="Proteomes" id="UP000008561">
    <property type="component" value="Chromosome"/>
</dbReference>
<dbReference type="GO" id="GO:0022625">
    <property type="term" value="C:cytosolic large ribosomal subunit"/>
    <property type="evidence" value="ECO:0007669"/>
    <property type="project" value="TreeGrafter"/>
</dbReference>
<dbReference type="GO" id="GO:0019843">
    <property type="term" value="F:rRNA binding"/>
    <property type="evidence" value="ECO:0007669"/>
    <property type="project" value="UniProtKB-UniRule"/>
</dbReference>
<dbReference type="GO" id="GO:0003735">
    <property type="term" value="F:structural constituent of ribosome"/>
    <property type="evidence" value="ECO:0007669"/>
    <property type="project" value="InterPro"/>
</dbReference>
<dbReference type="GO" id="GO:0006412">
    <property type="term" value="P:translation"/>
    <property type="evidence" value="ECO:0007669"/>
    <property type="project" value="UniProtKB-UniRule"/>
</dbReference>
<dbReference type="CDD" id="cd00336">
    <property type="entry name" value="Ribosomal_L22"/>
    <property type="match status" value="1"/>
</dbReference>
<dbReference type="Gene3D" id="3.90.470.10">
    <property type="entry name" value="Ribosomal protein L22/L17"/>
    <property type="match status" value="1"/>
</dbReference>
<dbReference type="HAMAP" id="MF_01331_B">
    <property type="entry name" value="Ribosomal_uL22_B"/>
    <property type="match status" value="1"/>
</dbReference>
<dbReference type="InterPro" id="IPR001063">
    <property type="entry name" value="Ribosomal_uL22"/>
</dbReference>
<dbReference type="InterPro" id="IPR005727">
    <property type="entry name" value="Ribosomal_uL22_bac/chlpt-type"/>
</dbReference>
<dbReference type="InterPro" id="IPR047867">
    <property type="entry name" value="Ribosomal_uL22_bac/org-type"/>
</dbReference>
<dbReference type="InterPro" id="IPR018260">
    <property type="entry name" value="Ribosomal_uL22_CS"/>
</dbReference>
<dbReference type="InterPro" id="IPR036394">
    <property type="entry name" value="Ribosomal_uL22_sf"/>
</dbReference>
<dbReference type="NCBIfam" id="TIGR01044">
    <property type="entry name" value="rplV_bact"/>
    <property type="match status" value="1"/>
</dbReference>
<dbReference type="PANTHER" id="PTHR13501">
    <property type="entry name" value="CHLOROPLAST 50S RIBOSOMAL PROTEIN L22-RELATED"/>
    <property type="match status" value="1"/>
</dbReference>
<dbReference type="PANTHER" id="PTHR13501:SF8">
    <property type="entry name" value="LARGE RIBOSOMAL SUBUNIT PROTEIN UL22M"/>
    <property type="match status" value="1"/>
</dbReference>
<dbReference type="Pfam" id="PF00237">
    <property type="entry name" value="Ribosomal_L22"/>
    <property type="match status" value="1"/>
</dbReference>
<dbReference type="SUPFAM" id="SSF54843">
    <property type="entry name" value="Ribosomal protein L22"/>
    <property type="match status" value="1"/>
</dbReference>
<dbReference type="PROSITE" id="PS00464">
    <property type="entry name" value="RIBOSOMAL_L22"/>
    <property type="match status" value="1"/>
</dbReference>
<evidence type="ECO:0000255" key="1">
    <source>
        <dbReference type="HAMAP-Rule" id="MF_01331"/>
    </source>
</evidence>
<evidence type="ECO:0000305" key="2"/>
<gene>
    <name evidence="1" type="primary">rplV</name>
    <name type="ordered locus">Dole_0713</name>
</gene>
<feature type="chain" id="PRO_0000354463" description="Large ribosomal subunit protein uL22">
    <location>
        <begin position="1"/>
        <end position="114"/>
    </location>
</feature>